<gene>
    <name evidence="1" type="primary">cobT</name>
    <name type="ordered locus">Sfri_0876</name>
</gene>
<comment type="function">
    <text evidence="1">Catalyzes the synthesis of alpha-ribazole-5'-phosphate from nicotinate mononucleotide (NAMN) and 5,6-dimethylbenzimidazole (DMB).</text>
</comment>
<comment type="catalytic activity">
    <reaction evidence="1">
        <text>5,6-dimethylbenzimidazole + nicotinate beta-D-ribonucleotide = alpha-ribazole 5'-phosphate + nicotinate + H(+)</text>
        <dbReference type="Rhea" id="RHEA:11196"/>
        <dbReference type="ChEBI" id="CHEBI:15378"/>
        <dbReference type="ChEBI" id="CHEBI:15890"/>
        <dbReference type="ChEBI" id="CHEBI:32544"/>
        <dbReference type="ChEBI" id="CHEBI:57502"/>
        <dbReference type="ChEBI" id="CHEBI:57918"/>
        <dbReference type="EC" id="2.4.2.21"/>
    </reaction>
</comment>
<comment type="pathway">
    <text evidence="1">Nucleoside biosynthesis; alpha-ribazole biosynthesis; alpha-ribazole from 5,6-dimethylbenzimidazole: step 1/2.</text>
</comment>
<comment type="similarity">
    <text evidence="1">Belongs to the CobT family.</text>
</comment>
<keyword id="KW-0169">Cobalamin biosynthesis</keyword>
<keyword id="KW-0328">Glycosyltransferase</keyword>
<keyword id="KW-1185">Reference proteome</keyword>
<keyword id="KW-0808">Transferase</keyword>
<evidence type="ECO:0000255" key="1">
    <source>
        <dbReference type="HAMAP-Rule" id="MF_00230"/>
    </source>
</evidence>
<protein>
    <recommendedName>
        <fullName evidence="1">Nicotinate-nucleotide--dimethylbenzimidazole phosphoribosyltransferase</fullName>
        <shortName evidence="1">NN:DBI PRT</shortName>
        <ecNumber evidence="1">2.4.2.21</ecNumber>
    </recommendedName>
    <alternativeName>
        <fullName evidence="1">N(1)-alpha-phosphoribosyltransferase</fullName>
    </alternativeName>
</protein>
<feature type="chain" id="PRO_1000021627" description="Nicotinate-nucleotide--dimethylbenzimidazole phosphoribosyltransferase">
    <location>
        <begin position="1"/>
        <end position="351"/>
    </location>
</feature>
<feature type="active site" description="Proton acceptor" evidence="1">
    <location>
        <position position="318"/>
    </location>
</feature>
<sequence>MFVIEAVKSDVDANIQHKINQKTKPLGALGQLESLALQIARVQYRGDKQSLSTPLQITKPTMLVFAADHGIAAYGVSIAPSEVTTQMVHNFVQGGAAINVFCRQVGFELEIIDCGILQPLTGQANVIDQRLGAGTKAMHLAAAMPLEKVAQGFEFARQLVARHIDVGCNLIALGEMGIGNTSAATAVMSAMLNIDVEQCVGRGTGIDDATLVIKTKLINQALDLHQHELVSPEAILAHVGGFEIVQMTGAILAAAEQKILVVIDGFIATAAALVAVKLSPQSRDYLVFAHESQEQGHKLLLQQLQATPLLSLGLRLGEGTGAALALPLIQAAVNFYNQMASFDDAGVNNVV</sequence>
<accession>Q086T6</accession>
<dbReference type="EC" id="2.4.2.21" evidence="1"/>
<dbReference type="EMBL" id="CP000447">
    <property type="protein sequence ID" value="ABI70729.1"/>
    <property type="molecule type" value="Genomic_DNA"/>
</dbReference>
<dbReference type="RefSeq" id="WP_011636350.1">
    <property type="nucleotide sequence ID" value="NC_008345.1"/>
</dbReference>
<dbReference type="SMR" id="Q086T6"/>
<dbReference type="STRING" id="318167.Sfri_0876"/>
<dbReference type="KEGG" id="sfr:Sfri_0876"/>
<dbReference type="eggNOG" id="COG2038">
    <property type="taxonomic scope" value="Bacteria"/>
</dbReference>
<dbReference type="HOGENOM" id="CLU_002982_0_0_6"/>
<dbReference type="OrthoDB" id="9781491at2"/>
<dbReference type="UniPathway" id="UPA00061">
    <property type="reaction ID" value="UER00516"/>
</dbReference>
<dbReference type="Proteomes" id="UP000000684">
    <property type="component" value="Chromosome"/>
</dbReference>
<dbReference type="GO" id="GO:0008939">
    <property type="term" value="F:nicotinate-nucleotide-dimethylbenzimidazole phosphoribosyltransferase activity"/>
    <property type="evidence" value="ECO:0007669"/>
    <property type="project" value="UniProtKB-UniRule"/>
</dbReference>
<dbReference type="GO" id="GO:0009236">
    <property type="term" value="P:cobalamin biosynthetic process"/>
    <property type="evidence" value="ECO:0007669"/>
    <property type="project" value="UniProtKB-KW"/>
</dbReference>
<dbReference type="CDD" id="cd02439">
    <property type="entry name" value="DMB-PRT_CobT"/>
    <property type="match status" value="1"/>
</dbReference>
<dbReference type="FunFam" id="3.40.50.10210:FF:000001">
    <property type="entry name" value="Nicotinate-nucleotide--dimethylbenzimidazole phosphoribosyltransferase"/>
    <property type="match status" value="1"/>
</dbReference>
<dbReference type="Gene3D" id="1.10.1610.10">
    <property type="match status" value="1"/>
</dbReference>
<dbReference type="Gene3D" id="3.40.50.10210">
    <property type="match status" value="1"/>
</dbReference>
<dbReference type="HAMAP" id="MF_00230">
    <property type="entry name" value="CobT"/>
    <property type="match status" value="1"/>
</dbReference>
<dbReference type="InterPro" id="IPR003200">
    <property type="entry name" value="Nict_dMeBzImd_PRibTrfase"/>
</dbReference>
<dbReference type="InterPro" id="IPR017846">
    <property type="entry name" value="Nict_dMeBzImd_PRibTrfase_bact"/>
</dbReference>
<dbReference type="InterPro" id="IPR023195">
    <property type="entry name" value="Nict_dMeBzImd_PRibTrfase_N"/>
</dbReference>
<dbReference type="InterPro" id="IPR036087">
    <property type="entry name" value="Nict_dMeBzImd_PRibTrfase_sf"/>
</dbReference>
<dbReference type="NCBIfam" id="TIGR03160">
    <property type="entry name" value="cobT_DBIPRT"/>
    <property type="match status" value="1"/>
</dbReference>
<dbReference type="NCBIfam" id="NF000996">
    <property type="entry name" value="PRK00105.1"/>
    <property type="match status" value="1"/>
</dbReference>
<dbReference type="PANTHER" id="PTHR43463">
    <property type="entry name" value="NICOTINATE-NUCLEOTIDE--DIMETHYLBENZIMIDAZOLE PHOSPHORIBOSYLTRANSFERASE"/>
    <property type="match status" value="1"/>
</dbReference>
<dbReference type="PANTHER" id="PTHR43463:SF1">
    <property type="entry name" value="NICOTINATE-NUCLEOTIDE--DIMETHYLBENZIMIDAZOLE PHOSPHORIBOSYLTRANSFERASE"/>
    <property type="match status" value="1"/>
</dbReference>
<dbReference type="Pfam" id="PF02277">
    <property type="entry name" value="DBI_PRT"/>
    <property type="match status" value="1"/>
</dbReference>
<dbReference type="SUPFAM" id="SSF52733">
    <property type="entry name" value="Nicotinate mononucleotide:5,6-dimethylbenzimidazole phosphoribosyltransferase (CobT)"/>
    <property type="match status" value="1"/>
</dbReference>
<name>COBT_SHEFN</name>
<organism>
    <name type="scientific">Shewanella frigidimarina (strain NCIMB 400)</name>
    <dbReference type="NCBI Taxonomy" id="318167"/>
    <lineage>
        <taxon>Bacteria</taxon>
        <taxon>Pseudomonadati</taxon>
        <taxon>Pseudomonadota</taxon>
        <taxon>Gammaproteobacteria</taxon>
        <taxon>Alteromonadales</taxon>
        <taxon>Shewanellaceae</taxon>
        <taxon>Shewanella</taxon>
    </lineage>
</organism>
<proteinExistence type="inferred from homology"/>
<reference key="1">
    <citation type="submission" date="2006-08" db="EMBL/GenBank/DDBJ databases">
        <title>Complete sequence of Shewanella frigidimarina NCIMB 400.</title>
        <authorList>
            <consortium name="US DOE Joint Genome Institute"/>
            <person name="Copeland A."/>
            <person name="Lucas S."/>
            <person name="Lapidus A."/>
            <person name="Barry K."/>
            <person name="Detter J.C."/>
            <person name="Glavina del Rio T."/>
            <person name="Hammon N."/>
            <person name="Israni S."/>
            <person name="Dalin E."/>
            <person name="Tice H."/>
            <person name="Pitluck S."/>
            <person name="Fredrickson J.K."/>
            <person name="Kolker E."/>
            <person name="McCuel L.A."/>
            <person name="DiChristina T."/>
            <person name="Nealson K.H."/>
            <person name="Newman D."/>
            <person name="Tiedje J.M."/>
            <person name="Zhou J."/>
            <person name="Romine M.F."/>
            <person name="Culley D.E."/>
            <person name="Serres M."/>
            <person name="Chertkov O."/>
            <person name="Brettin T."/>
            <person name="Bruce D."/>
            <person name="Han C."/>
            <person name="Tapia R."/>
            <person name="Gilna P."/>
            <person name="Schmutz J."/>
            <person name="Larimer F."/>
            <person name="Land M."/>
            <person name="Hauser L."/>
            <person name="Kyrpides N."/>
            <person name="Mikhailova N."/>
            <person name="Richardson P."/>
        </authorList>
    </citation>
    <scope>NUCLEOTIDE SEQUENCE [LARGE SCALE GENOMIC DNA]</scope>
    <source>
        <strain>NCIMB 400</strain>
    </source>
</reference>